<comment type="function">
    <text evidence="1">This is one of the proteins that binds to the 5S RNA in the ribosome where it forms part of the central protuberance.</text>
</comment>
<comment type="subunit">
    <text evidence="1">Part of the 50S ribosomal subunit; part of the 5S rRNA/L5/L18/L25 subcomplex. Contacts the 5S rRNA. Binds to the 5S rRNA independently of L5 and L18.</text>
</comment>
<comment type="similarity">
    <text evidence="1">Belongs to the bacterial ribosomal protein bL25 family. CTC subfamily.</text>
</comment>
<name>RL25_CHLTE</name>
<gene>
    <name evidence="1" type="primary">rplY</name>
    <name evidence="1" type="synonym">ctc</name>
    <name type="ordered locus">CT1362</name>
</gene>
<evidence type="ECO:0000255" key="1">
    <source>
        <dbReference type="HAMAP-Rule" id="MF_01334"/>
    </source>
</evidence>
<evidence type="ECO:0000305" key="2"/>
<protein>
    <recommendedName>
        <fullName evidence="1">Large ribosomal subunit protein bL25</fullName>
    </recommendedName>
    <alternativeName>
        <fullName evidence="2">50S ribosomal protein L25</fullName>
    </alternativeName>
    <alternativeName>
        <fullName evidence="1">General stress protein CTC</fullName>
    </alternativeName>
</protein>
<accession>Q8KCQ1</accession>
<dbReference type="EMBL" id="AE006470">
    <property type="protein sequence ID" value="AAM72591.1"/>
    <property type="molecule type" value="Genomic_DNA"/>
</dbReference>
<dbReference type="RefSeq" id="NP_662249.1">
    <property type="nucleotide sequence ID" value="NC_002932.3"/>
</dbReference>
<dbReference type="RefSeq" id="WP_010933030.1">
    <property type="nucleotide sequence ID" value="NC_002932.3"/>
</dbReference>
<dbReference type="SMR" id="Q8KCQ1"/>
<dbReference type="STRING" id="194439.CT1362"/>
<dbReference type="EnsemblBacteria" id="AAM72591">
    <property type="protein sequence ID" value="AAM72591"/>
    <property type="gene ID" value="CT1362"/>
</dbReference>
<dbReference type="KEGG" id="cte:CT1362"/>
<dbReference type="PATRIC" id="fig|194439.7.peg.1240"/>
<dbReference type="eggNOG" id="COG1825">
    <property type="taxonomic scope" value="Bacteria"/>
</dbReference>
<dbReference type="HOGENOM" id="CLU_075939_2_1_10"/>
<dbReference type="OrthoDB" id="9786489at2"/>
<dbReference type="Proteomes" id="UP000001007">
    <property type="component" value="Chromosome"/>
</dbReference>
<dbReference type="GO" id="GO:0022625">
    <property type="term" value="C:cytosolic large ribosomal subunit"/>
    <property type="evidence" value="ECO:0007669"/>
    <property type="project" value="TreeGrafter"/>
</dbReference>
<dbReference type="GO" id="GO:0008097">
    <property type="term" value="F:5S rRNA binding"/>
    <property type="evidence" value="ECO:0007669"/>
    <property type="project" value="InterPro"/>
</dbReference>
<dbReference type="GO" id="GO:0003735">
    <property type="term" value="F:structural constituent of ribosome"/>
    <property type="evidence" value="ECO:0007669"/>
    <property type="project" value="InterPro"/>
</dbReference>
<dbReference type="GO" id="GO:0006412">
    <property type="term" value="P:translation"/>
    <property type="evidence" value="ECO:0007669"/>
    <property type="project" value="UniProtKB-UniRule"/>
</dbReference>
<dbReference type="CDD" id="cd00495">
    <property type="entry name" value="Ribosomal_L25_TL5_CTC"/>
    <property type="match status" value="1"/>
</dbReference>
<dbReference type="Gene3D" id="2.170.120.20">
    <property type="entry name" value="Ribosomal protein L25, beta domain"/>
    <property type="match status" value="1"/>
</dbReference>
<dbReference type="Gene3D" id="2.40.240.10">
    <property type="entry name" value="Ribosomal Protein L25, Chain P"/>
    <property type="match status" value="1"/>
</dbReference>
<dbReference type="HAMAP" id="MF_01334">
    <property type="entry name" value="Ribosomal_bL25_CTC"/>
    <property type="match status" value="1"/>
</dbReference>
<dbReference type="InterPro" id="IPR020056">
    <property type="entry name" value="Rbsml_bL25/Gln-tRNA_synth_N"/>
</dbReference>
<dbReference type="InterPro" id="IPR011035">
    <property type="entry name" value="Ribosomal_bL25/Gln-tRNA_synth"/>
</dbReference>
<dbReference type="InterPro" id="IPR020057">
    <property type="entry name" value="Ribosomal_bL25_b-dom"/>
</dbReference>
<dbReference type="InterPro" id="IPR037121">
    <property type="entry name" value="Ribosomal_bL25_C"/>
</dbReference>
<dbReference type="InterPro" id="IPR001021">
    <property type="entry name" value="Ribosomal_bL25_long"/>
</dbReference>
<dbReference type="InterPro" id="IPR029751">
    <property type="entry name" value="Ribosomal_L25_dom"/>
</dbReference>
<dbReference type="InterPro" id="IPR020930">
    <property type="entry name" value="Ribosomal_uL5_bac-type"/>
</dbReference>
<dbReference type="NCBIfam" id="TIGR00731">
    <property type="entry name" value="bL25_bact_ctc"/>
    <property type="match status" value="1"/>
</dbReference>
<dbReference type="NCBIfam" id="NF004136">
    <property type="entry name" value="PRK05618.3-2"/>
    <property type="match status" value="1"/>
</dbReference>
<dbReference type="PANTHER" id="PTHR33284">
    <property type="entry name" value="RIBOSOMAL PROTEIN L25/GLN-TRNA SYNTHETASE, ANTI-CODON-BINDING DOMAIN-CONTAINING PROTEIN"/>
    <property type="match status" value="1"/>
</dbReference>
<dbReference type="PANTHER" id="PTHR33284:SF1">
    <property type="entry name" value="RIBOSOMAL PROTEIN L25_GLN-TRNA SYNTHETASE, ANTI-CODON-BINDING DOMAIN-CONTAINING PROTEIN"/>
    <property type="match status" value="1"/>
</dbReference>
<dbReference type="Pfam" id="PF01386">
    <property type="entry name" value="Ribosomal_L25p"/>
    <property type="match status" value="1"/>
</dbReference>
<dbReference type="Pfam" id="PF14693">
    <property type="entry name" value="Ribosomal_TL5_C"/>
    <property type="match status" value="1"/>
</dbReference>
<dbReference type="SUPFAM" id="SSF50715">
    <property type="entry name" value="Ribosomal protein L25-like"/>
    <property type="match status" value="1"/>
</dbReference>
<sequence>METRALSVNLREVKKNGAAKLRRLGQVPAVVYHKGEATVAISVEEISLNKLVHSSESHMIDLQYPDGKSVRSFIKDVQFDPVTDRVIHADFQLFSTDEVVEMEVPIHLEGECPGVKIGGGKIQINVHTLPLKGKPEAMPEHFTIDVSALELGQTLHIRDLQAIAPEGVQILGDADTSVVSVVAPRKEAETAAEGATAEA</sequence>
<proteinExistence type="inferred from homology"/>
<feature type="chain" id="PRO_0000181535" description="Large ribosomal subunit protein bL25">
    <location>
        <begin position="1"/>
        <end position="199"/>
    </location>
</feature>
<keyword id="KW-1185">Reference proteome</keyword>
<keyword id="KW-0687">Ribonucleoprotein</keyword>
<keyword id="KW-0689">Ribosomal protein</keyword>
<keyword id="KW-0694">RNA-binding</keyword>
<keyword id="KW-0699">rRNA-binding</keyword>
<organism>
    <name type="scientific">Chlorobaculum tepidum (strain ATCC 49652 / DSM 12025 / NBRC 103806 / TLS)</name>
    <name type="common">Chlorobium tepidum</name>
    <dbReference type="NCBI Taxonomy" id="194439"/>
    <lineage>
        <taxon>Bacteria</taxon>
        <taxon>Pseudomonadati</taxon>
        <taxon>Chlorobiota</taxon>
        <taxon>Chlorobiia</taxon>
        <taxon>Chlorobiales</taxon>
        <taxon>Chlorobiaceae</taxon>
        <taxon>Chlorobaculum</taxon>
    </lineage>
</organism>
<reference key="1">
    <citation type="journal article" date="2002" name="Proc. Natl. Acad. Sci. U.S.A.">
        <title>The complete genome sequence of Chlorobium tepidum TLS, a photosynthetic, anaerobic, green-sulfur bacterium.</title>
        <authorList>
            <person name="Eisen J.A."/>
            <person name="Nelson K.E."/>
            <person name="Paulsen I.T."/>
            <person name="Heidelberg J.F."/>
            <person name="Wu M."/>
            <person name="Dodson R.J."/>
            <person name="DeBoy R.T."/>
            <person name="Gwinn M.L."/>
            <person name="Nelson W.C."/>
            <person name="Haft D.H."/>
            <person name="Hickey E.K."/>
            <person name="Peterson J.D."/>
            <person name="Durkin A.S."/>
            <person name="Kolonay J.F."/>
            <person name="Yang F."/>
            <person name="Holt I.E."/>
            <person name="Umayam L.A."/>
            <person name="Mason T.M."/>
            <person name="Brenner M."/>
            <person name="Shea T.P."/>
            <person name="Parksey D.S."/>
            <person name="Nierman W.C."/>
            <person name="Feldblyum T.V."/>
            <person name="Hansen C.L."/>
            <person name="Craven M.B."/>
            <person name="Radune D."/>
            <person name="Vamathevan J.J."/>
            <person name="Khouri H.M."/>
            <person name="White O."/>
            <person name="Gruber T.M."/>
            <person name="Ketchum K.A."/>
            <person name="Venter J.C."/>
            <person name="Tettelin H."/>
            <person name="Bryant D.A."/>
            <person name="Fraser C.M."/>
        </authorList>
    </citation>
    <scope>NUCLEOTIDE SEQUENCE [LARGE SCALE GENOMIC DNA]</scope>
    <source>
        <strain>ATCC 49652 / DSM 12025 / NBRC 103806 / TLS</strain>
    </source>
</reference>